<sequence>MPFTLRYHTCGVTSLLHWNDEQDVPTLISGDEKGSILVWNLLSRKPYYKYTCRGQIVSFQQLNDLIIATSKDHTLRILKFPSTLTTKEGFPDYSLPELELIYEIPVNTLNFANTAVEQVDTNNYRLWCCNTQDSETIDIYEFDLRDSKSLKRIHRALSLYEVISGLVDPSTMKFDKLGTTMKFIIYEGIIYLGFESGFVIGLRLTQGLHIVYISSANYPEPVLDLTVGKDLGKVISSSTNSSLGLHTPNINTESHNNVSSKDVVVDDSTIHSEMVNIPINKVSHIQQVDNLLIAASWSGRTVVFDINGNKVLASILKERGQVLIDDNPYGNASLPENSTKVKISAMTCIPKFNTVNPSCTSEGTRRRWIRFYKETWCLIGYADGSIKATEVTFDNLITA</sequence>
<organism>
    <name type="scientific">Kluyveromyces lactis (strain ATCC 8585 / CBS 2359 / DSM 70799 / NBRC 1267 / NRRL Y-1140 / WM37)</name>
    <name type="common">Yeast</name>
    <name type="synonym">Candida sphaerica</name>
    <dbReference type="NCBI Taxonomy" id="284590"/>
    <lineage>
        <taxon>Eukaryota</taxon>
        <taxon>Fungi</taxon>
        <taxon>Dikarya</taxon>
        <taxon>Ascomycota</taxon>
        <taxon>Saccharomycotina</taxon>
        <taxon>Saccharomycetes</taxon>
        <taxon>Saccharomycetales</taxon>
        <taxon>Saccharomycetaceae</taxon>
        <taxon>Kluyveromyces</taxon>
    </lineage>
</organism>
<protein>
    <recommendedName>
        <fullName>ASTRA-associated protein 1</fullName>
    </recommendedName>
</protein>
<feature type="chain" id="PRO_0000402211" description="ASTRA-associated protein 1">
    <location>
        <begin position="1"/>
        <end position="399"/>
    </location>
</feature>
<feature type="repeat" description="WD 1">
    <location>
        <begin position="7"/>
        <end position="49"/>
    </location>
</feature>
<feature type="repeat" description="WD 2">
    <location>
        <begin position="51"/>
        <end position="88"/>
    </location>
</feature>
<feature type="repeat" description="WD 3">
    <location>
        <begin position="101"/>
        <end position="141"/>
    </location>
</feature>
<feature type="repeat" description="WD 4">
    <location>
        <begin position="269"/>
        <end position="314"/>
    </location>
</feature>
<proteinExistence type="inferred from homology"/>
<keyword id="KW-0156">Chromatin regulator</keyword>
<keyword id="KW-0539">Nucleus</keyword>
<keyword id="KW-1185">Reference proteome</keyword>
<keyword id="KW-0677">Repeat</keyword>
<keyword id="KW-0853">WD repeat</keyword>
<comment type="function">
    <text evidence="1">Component of the ASTRA complex involved in chromatin remodeling.</text>
</comment>
<comment type="subunit">
    <text evidence="1">Component of the ASTRA chromatin remodeling machinery complex.</text>
</comment>
<comment type="subcellular location">
    <subcellularLocation>
        <location evidence="1">Nucleus</location>
    </subcellularLocation>
</comment>
<comment type="similarity">
    <text evidence="2">Belongs to the WD repeat ASA1 family.</text>
</comment>
<dbReference type="EMBL" id="CR382124">
    <property type="protein sequence ID" value="CAH00563.1"/>
    <property type="molecule type" value="Genomic_DNA"/>
</dbReference>
<dbReference type="RefSeq" id="XP_453467.1">
    <property type="nucleotide sequence ID" value="XM_453467.1"/>
</dbReference>
<dbReference type="FunCoup" id="Q6CRH2">
    <property type="interactions" value="65"/>
</dbReference>
<dbReference type="STRING" id="284590.Q6CRH2"/>
<dbReference type="PaxDb" id="284590-Q6CRH2"/>
<dbReference type="KEGG" id="kla:KLLA0_D09086g"/>
<dbReference type="eggNOG" id="ENOG502QU4T">
    <property type="taxonomic scope" value="Eukaryota"/>
</dbReference>
<dbReference type="HOGENOM" id="CLU_045414_1_0_1"/>
<dbReference type="InParanoid" id="Q6CRH2"/>
<dbReference type="OMA" id="LVCCNTQ"/>
<dbReference type="Proteomes" id="UP000000598">
    <property type="component" value="Chromosome D"/>
</dbReference>
<dbReference type="GO" id="GO:0005634">
    <property type="term" value="C:nucleus"/>
    <property type="evidence" value="ECO:0007669"/>
    <property type="project" value="UniProtKB-SubCell"/>
</dbReference>
<dbReference type="GO" id="GO:0006325">
    <property type="term" value="P:chromatin organization"/>
    <property type="evidence" value="ECO:0007669"/>
    <property type="project" value="UniProtKB-KW"/>
</dbReference>
<dbReference type="Gene3D" id="2.130.10.10">
    <property type="entry name" value="YVTN repeat-like/Quinoprotein amine dehydrogenase"/>
    <property type="match status" value="1"/>
</dbReference>
<dbReference type="InterPro" id="IPR015943">
    <property type="entry name" value="WD40/YVTN_repeat-like_dom_sf"/>
</dbReference>
<dbReference type="InterPro" id="IPR036322">
    <property type="entry name" value="WD40_repeat_dom_sf"/>
</dbReference>
<dbReference type="SUPFAM" id="SSF50978">
    <property type="entry name" value="WD40 repeat-like"/>
    <property type="match status" value="1"/>
</dbReference>
<gene>
    <name type="primary">ASA1</name>
    <name type="ordered locus">KLLA0D09086g</name>
</gene>
<name>ASA1_KLULA</name>
<accession>Q6CRH2</accession>
<reference key="1">
    <citation type="journal article" date="2004" name="Nature">
        <title>Genome evolution in yeasts.</title>
        <authorList>
            <person name="Dujon B."/>
            <person name="Sherman D."/>
            <person name="Fischer G."/>
            <person name="Durrens P."/>
            <person name="Casaregola S."/>
            <person name="Lafontaine I."/>
            <person name="de Montigny J."/>
            <person name="Marck C."/>
            <person name="Neuveglise C."/>
            <person name="Talla E."/>
            <person name="Goffard N."/>
            <person name="Frangeul L."/>
            <person name="Aigle M."/>
            <person name="Anthouard V."/>
            <person name="Babour A."/>
            <person name="Barbe V."/>
            <person name="Barnay S."/>
            <person name="Blanchin S."/>
            <person name="Beckerich J.-M."/>
            <person name="Beyne E."/>
            <person name="Bleykasten C."/>
            <person name="Boisrame A."/>
            <person name="Boyer J."/>
            <person name="Cattolico L."/>
            <person name="Confanioleri F."/>
            <person name="de Daruvar A."/>
            <person name="Despons L."/>
            <person name="Fabre E."/>
            <person name="Fairhead C."/>
            <person name="Ferry-Dumazet H."/>
            <person name="Groppi A."/>
            <person name="Hantraye F."/>
            <person name="Hennequin C."/>
            <person name="Jauniaux N."/>
            <person name="Joyet P."/>
            <person name="Kachouri R."/>
            <person name="Kerrest A."/>
            <person name="Koszul R."/>
            <person name="Lemaire M."/>
            <person name="Lesur I."/>
            <person name="Ma L."/>
            <person name="Muller H."/>
            <person name="Nicaud J.-M."/>
            <person name="Nikolski M."/>
            <person name="Oztas S."/>
            <person name="Ozier-Kalogeropoulos O."/>
            <person name="Pellenz S."/>
            <person name="Potier S."/>
            <person name="Richard G.-F."/>
            <person name="Straub M.-L."/>
            <person name="Suleau A."/>
            <person name="Swennen D."/>
            <person name="Tekaia F."/>
            <person name="Wesolowski-Louvel M."/>
            <person name="Westhof E."/>
            <person name="Wirth B."/>
            <person name="Zeniou-Meyer M."/>
            <person name="Zivanovic Y."/>
            <person name="Bolotin-Fukuhara M."/>
            <person name="Thierry A."/>
            <person name="Bouchier C."/>
            <person name="Caudron B."/>
            <person name="Scarpelli C."/>
            <person name="Gaillardin C."/>
            <person name="Weissenbach J."/>
            <person name="Wincker P."/>
            <person name="Souciet J.-L."/>
        </authorList>
    </citation>
    <scope>NUCLEOTIDE SEQUENCE [LARGE SCALE GENOMIC DNA]</scope>
    <source>
        <strain>ATCC 8585 / CBS 2359 / DSM 70799 / NBRC 1267 / NRRL Y-1140 / WM37</strain>
    </source>
</reference>
<evidence type="ECO:0000250" key="1"/>
<evidence type="ECO:0000305" key="2"/>